<reference key="1">
    <citation type="journal article" date="2007" name="PLoS Genet.">
        <title>Genome analysis of Minibacterium massiliensis highlights the convergent evolution of water-living bacteria.</title>
        <authorList>
            <person name="Audic S."/>
            <person name="Robert C."/>
            <person name="Campagna B."/>
            <person name="Parinello H."/>
            <person name="Claverie J.-M."/>
            <person name="Raoult D."/>
            <person name="Drancourt M."/>
        </authorList>
    </citation>
    <scope>NUCLEOTIDE SEQUENCE [LARGE SCALE GENOMIC DNA]</scope>
    <source>
        <strain>Marseille</strain>
    </source>
</reference>
<dbReference type="EMBL" id="CP000269">
    <property type="protein sequence ID" value="ABR91375.1"/>
    <property type="molecule type" value="Genomic_DNA"/>
</dbReference>
<dbReference type="RefSeq" id="WP_005663428.1">
    <property type="nucleotide sequence ID" value="NC_009659.1"/>
</dbReference>
<dbReference type="SMR" id="A6T3I3"/>
<dbReference type="STRING" id="375286.mma_3390"/>
<dbReference type="GeneID" id="90162561"/>
<dbReference type="KEGG" id="mms:mma_3390"/>
<dbReference type="eggNOG" id="COG0361">
    <property type="taxonomic scope" value="Bacteria"/>
</dbReference>
<dbReference type="HOGENOM" id="CLU_151267_1_0_4"/>
<dbReference type="OrthoDB" id="9803250at2"/>
<dbReference type="Proteomes" id="UP000006388">
    <property type="component" value="Chromosome"/>
</dbReference>
<dbReference type="GO" id="GO:0005829">
    <property type="term" value="C:cytosol"/>
    <property type="evidence" value="ECO:0007669"/>
    <property type="project" value="TreeGrafter"/>
</dbReference>
<dbReference type="GO" id="GO:0043022">
    <property type="term" value="F:ribosome binding"/>
    <property type="evidence" value="ECO:0007669"/>
    <property type="project" value="UniProtKB-UniRule"/>
</dbReference>
<dbReference type="GO" id="GO:0019843">
    <property type="term" value="F:rRNA binding"/>
    <property type="evidence" value="ECO:0007669"/>
    <property type="project" value="UniProtKB-UniRule"/>
</dbReference>
<dbReference type="GO" id="GO:0003743">
    <property type="term" value="F:translation initiation factor activity"/>
    <property type="evidence" value="ECO:0007669"/>
    <property type="project" value="UniProtKB-UniRule"/>
</dbReference>
<dbReference type="CDD" id="cd04451">
    <property type="entry name" value="S1_IF1"/>
    <property type="match status" value="1"/>
</dbReference>
<dbReference type="FunFam" id="2.40.50.140:FF:000002">
    <property type="entry name" value="Translation initiation factor IF-1"/>
    <property type="match status" value="1"/>
</dbReference>
<dbReference type="Gene3D" id="2.40.50.140">
    <property type="entry name" value="Nucleic acid-binding proteins"/>
    <property type="match status" value="1"/>
</dbReference>
<dbReference type="HAMAP" id="MF_00075">
    <property type="entry name" value="IF_1"/>
    <property type="match status" value="1"/>
</dbReference>
<dbReference type="InterPro" id="IPR012340">
    <property type="entry name" value="NA-bd_OB-fold"/>
</dbReference>
<dbReference type="InterPro" id="IPR006196">
    <property type="entry name" value="RNA-binding_domain_S1_IF1"/>
</dbReference>
<dbReference type="InterPro" id="IPR003029">
    <property type="entry name" value="S1_domain"/>
</dbReference>
<dbReference type="InterPro" id="IPR004368">
    <property type="entry name" value="TIF_IF1"/>
</dbReference>
<dbReference type="NCBIfam" id="TIGR00008">
    <property type="entry name" value="infA"/>
    <property type="match status" value="1"/>
</dbReference>
<dbReference type="PANTHER" id="PTHR33370">
    <property type="entry name" value="TRANSLATION INITIATION FACTOR IF-1, CHLOROPLASTIC"/>
    <property type="match status" value="1"/>
</dbReference>
<dbReference type="PANTHER" id="PTHR33370:SF1">
    <property type="entry name" value="TRANSLATION INITIATION FACTOR IF-1, CHLOROPLASTIC"/>
    <property type="match status" value="1"/>
</dbReference>
<dbReference type="Pfam" id="PF01176">
    <property type="entry name" value="eIF-1a"/>
    <property type="match status" value="1"/>
</dbReference>
<dbReference type="SMART" id="SM00316">
    <property type="entry name" value="S1"/>
    <property type="match status" value="1"/>
</dbReference>
<dbReference type="SUPFAM" id="SSF50249">
    <property type="entry name" value="Nucleic acid-binding proteins"/>
    <property type="match status" value="1"/>
</dbReference>
<dbReference type="PROSITE" id="PS50832">
    <property type="entry name" value="S1_IF1_TYPE"/>
    <property type="match status" value="1"/>
</dbReference>
<feature type="chain" id="PRO_0000338840" description="Translation initiation factor IF-1">
    <location>
        <begin position="1"/>
        <end position="72"/>
    </location>
</feature>
<feature type="domain" description="S1-like" evidence="1">
    <location>
        <begin position="1"/>
        <end position="72"/>
    </location>
</feature>
<comment type="function">
    <text evidence="1">One of the essential components for the initiation of protein synthesis. Stabilizes the binding of IF-2 and IF-3 on the 30S subunit to which N-formylmethionyl-tRNA(fMet) subsequently binds. Helps modulate mRNA selection, yielding the 30S pre-initiation complex (PIC). Upon addition of the 50S ribosomal subunit IF-1, IF-2 and IF-3 are released leaving the mature 70S translation initiation complex.</text>
</comment>
<comment type="subunit">
    <text evidence="1">Component of the 30S ribosomal translation pre-initiation complex which assembles on the 30S ribosome in the order IF-2 and IF-3, IF-1 and N-formylmethionyl-tRNA(fMet); mRNA recruitment can occur at any time during PIC assembly.</text>
</comment>
<comment type="subcellular location">
    <subcellularLocation>
        <location evidence="1">Cytoplasm</location>
    </subcellularLocation>
</comment>
<comment type="similarity">
    <text evidence="1">Belongs to the IF-1 family.</text>
</comment>
<evidence type="ECO:0000255" key="1">
    <source>
        <dbReference type="HAMAP-Rule" id="MF_00075"/>
    </source>
</evidence>
<gene>
    <name evidence="1" type="primary">infA</name>
    <name type="ordered locus">mma_3390</name>
</gene>
<protein>
    <recommendedName>
        <fullName evidence="1">Translation initiation factor IF-1</fullName>
    </recommendedName>
</protein>
<name>IF1_JANMA</name>
<sequence length="72" mass="8239">MAKDDVIQMQGEILENLPNATFRVKLENGHVVLGHISGKMRMNYIRILPGDKVTVELTPYDLSRARIVFRTK</sequence>
<proteinExistence type="inferred from homology"/>
<accession>A6T3I3</accession>
<keyword id="KW-0963">Cytoplasm</keyword>
<keyword id="KW-0396">Initiation factor</keyword>
<keyword id="KW-0648">Protein biosynthesis</keyword>
<keyword id="KW-0694">RNA-binding</keyword>
<keyword id="KW-0699">rRNA-binding</keyword>
<organism>
    <name type="scientific">Janthinobacterium sp. (strain Marseille)</name>
    <name type="common">Minibacterium massiliensis</name>
    <dbReference type="NCBI Taxonomy" id="375286"/>
    <lineage>
        <taxon>Bacteria</taxon>
        <taxon>Pseudomonadati</taxon>
        <taxon>Pseudomonadota</taxon>
        <taxon>Betaproteobacteria</taxon>
        <taxon>Burkholderiales</taxon>
        <taxon>Oxalobacteraceae</taxon>
        <taxon>Janthinobacterium</taxon>
    </lineage>
</organism>